<accession>B1X4Y8</accession>
<gene>
    <name evidence="1" type="primary">rpl36</name>
    <name type="ordered locus">PCC_0577</name>
</gene>
<sequence length="37" mass="4357">MKVRASVKEMCDKCRVIRRNGRVMVICTNPKHKQRQG</sequence>
<dbReference type="EMBL" id="CP000815">
    <property type="protein sequence ID" value="ACB43007.1"/>
    <property type="molecule type" value="Genomic_DNA"/>
</dbReference>
<dbReference type="RefSeq" id="YP_002049217.1">
    <property type="nucleotide sequence ID" value="NC_011087.1"/>
</dbReference>
<dbReference type="SMR" id="B1X4Y8"/>
<dbReference type="GeneID" id="6481589"/>
<dbReference type="GO" id="GO:0070111">
    <property type="term" value="C:organellar chromatophore"/>
    <property type="evidence" value="ECO:0007669"/>
    <property type="project" value="UniProtKB-SubCell"/>
</dbReference>
<dbReference type="GO" id="GO:0009536">
    <property type="term" value="C:plastid"/>
    <property type="evidence" value="ECO:0007669"/>
    <property type="project" value="UniProtKB-KW"/>
</dbReference>
<dbReference type="GO" id="GO:1990904">
    <property type="term" value="C:ribonucleoprotein complex"/>
    <property type="evidence" value="ECO:0007669"/>
    <property type="project" value="UniProtKB-KW"/>
</dbReference>
<dbReference type="GO" id="GO:0005840">
    <property type="term" value="C:ribosome"/>
    <property type="evidence" value="ECO:0007669"/>
    <property type="project" value="UniProtKB-KW"/>
</dbReference>
<dbReference type="GO" id="GO:0003735">
    <property type="term" value="F:structural constituent of ribosome"/>
    <property type="evidence" value="ECO:0007669"/>
    <property type="project" value="InterPro"/>
</dbReference>
<dbReference type="GO" id="GO:0006412">
    <property type="term" value="P:translation"/>
    <property type="evidence" value="ECO:0007669"/>
    <property type="project" value="InterPro"/>
</dbReference>
<dbReference type="HAMAP" id="MF_00251">
    <property type="entry name" value="Ribosomal_bL36"/>
    <property type="match status" value="1"/>
</dbReference>
<dbReference type="InterPro" id="IPR000473">
    <property type="entry name" value="Ribosomal_bL36"/>
</dbReference>
<dbReference type="InterPro" id="IPR035977">
    <property type="entry name" value="Ribosomal_bL36_sp"/>
</dbReference>
<dbReference type="NCBIfam" id="TIGR01022">
    <property type="entry name" value="rpmJ_bact"/>
    <property type="match status" value="1"/>
</dbReference>
<dbReference type="PANTHER" id="PTHR42888">
    <property type="entry name" value="50S RIBOSOMAL PROTEIN L36, CHLOROPLASTIC"/>
    <property type="match status" value="1"/>
</dbReference>
<dbReference type="PANTHER" id="PTHR42888:SF1">
    <property type="entry name" value="LARGE RIBOSOMAL SUBUNIT PROTEIN BL36C"/>
    <property type="match status" value="1"/>
</dbReference>
<dbReference type="Pfam" id="PF00444">
    <property type="entry name" value="Ribosomal_L36"/>
    <property type="match status" value="1"/>
</dbReference>
<dbReference type="SUPFAM" id="SSF57840">
    <property type="entry name" value="Ribosomal protein L36"/>
    <property type="match status" value="1"/>
</dbReference>
<dbReference type="PROSITE" id="PS00828">
    <property type="entry name" value="RIBOSOMAL_L36"/>
    <property type="match status" value="1"/>
</dbReference>
<geneLocation type="organellar chromatophore"/>
<keyword id="KW-0994">Organellar chromatophore</keyword>
<keyword id="KW-0934">Plastid</keyword>
<keyword id="KW-0687">Ribonucleoprotein</keyword>
<keyword id="KW-0689">Ribosomal protein</keyword>
<evidence type="ECO:0000255" key="1">
    <source>
        <dbReference type="HAMAP-Rule" id="MF_00251"/>
    </source>
</evidence>
<evidence type="ECO:0000305" key="2"/>
<name>RK36_PAUCH</name>
<comment type="subcellular location">
    <subcellularLocation>
        <location>Plastid</location>
        <location>Organellar chromatophore</location>
    </subcellularLocation>
</comment>
<comment type="similarity">
    <text evidence="1">Belongs to the bacterial ribosomal protein bL36 family.</text>
</comment>
<feature type="chain" id="PRO_0000344781" description="Large ribosomal subunit protein bL36c">
    <location>
        <begin position="1"/>
        <end position="37"/>
    </location>
</feature>
<proteinExistence type="inferred from homology"/>
<protein>
    <recommendedName>
        <fullName evidence="1">Large ribosomal subunit protein bL36c</fullName>
    </recommendedName>
    <alternativeName>
        <fullName evidence="2">50S ribosomal protein L36, organellar chromatophore</fullName>
    </alternativeName>
</protein>
<organism>
    <name type="scientific">Paulinella chromatophora</name>
    <dbReference type="NCBI Taxonomy" id="39717"/>
    <lineage>
        <taxon>Eukaryota</taxon>
        <taxon>Sar</taxon>
        <taxon>Rhizaria</taxon>
        <taxon>Cercozoa</taxon>
        <taxon>Imbricatea</taxon>
        <taxon>Silicofilosea</taxon>
        <taxon>Euglyphida</taxon>
        <taxon>Paulinellidae</taxon>
        <taxon>Paulinella</taxon>
    </lineage>
</organism>
<reference key="1">
    <citation type="journal article" date="2008" name="Curr. Biol.">
        <title>Chromatophore genome sequence of Paulinella sheds light on acquisition of photosynthesis by eukaryotes.</title>
        <authorList>
            <person name="Nowack E.C.M."/>
            <person name="Melkonian M."/>
            <person name="Gloeckner G."/>
        </authorList>
    </citation>
    <scope>NUCLEOTIDE SEQUENCE [LARGE SCALE GENOMIC DNA]</scope>
</reference>